<proteinExistence type="inferred from homology"/>
<gene>
    <name evidence="1" type="primary">aspS</name>
    <name type="ordered locus">Ppha_1620</name>
</gene>
<name>SYDND_PELPB</name>
<feature type="chain" id="PRO_1000091023" description="Aspartate--tRNA(Asp/Asn) ligase">
    <location>
        <begin position="1"/>
        <end position="601"/>
    </location>
</feature>
<feature type="region of interest" description="Aspartate" evidence="1">
    <location>
        <begin position="211"/>
        <end position="214"/>
    </location>
</feature>
<feature type="binding site" evidence="1">
    <location>
        <position position="187"/>
    </location>
    <ligand>
        <name>L-aspartate</name>
        <dbReference type="ChEBI" id="CHEBI:29991"/>
    </ligand>
</feature>
<feature type="binding site" evidence="1">
    <location>
        <begin position="233"/>
        <end position="235"/>
    </location>
    <ligand>
        <name>ATP</name>
        <dbReference type="ChEBI" id="CHEBI:30616"/>
    </ligand>
</feature>
<feature type="binding site" evidence="1">
    <location>
        <position position="233"/>
    </location>
    <ligand>
        <name>L-aspartate</name>
        <dbReference type="ChEBI" id="CHEBI:29991"/>
    </ligand>
</feature>
<feature type="binding site" evidence="1">
    <location>
        <position position="461"/>
    </location>
    <ligand>
        <name>L-aspartate</name>
        <dbReference type="ChEBI" id="CHEBI:29991"/>
    </ligand>
</feature>
<feature type="binding site" evidence="1">
    <location>
        <position position="495"/>
    </location>
    <ligand>
        <name>ATP</name>
        <dbReference type="ChEBI" id="CHEBI:30616"/>
    </ligand>
</feature>
<feature type="binding site" evidence="1">
    <location>
        <position position="502"/>
    </location>
    <ligand>
        <name>L-aspartate</name>
        <dbReference type="ChEBI" id="CHEBI:29991"/>
    </ligand>
</feature>
<feature type="binding site" evidence="1">
    <location>
        <begin position="547"/>
        <end position="550"/>
    </location>
    <ligand>
        <name>ATP</name>
        <dbReference type="ChEBI" id="CHEBI:30616"/>
    </ligand>
</feature>
<feature type="site" description="Important for tRNA non-discrimination" evidence="1">
    <location>
        <position position="44"/>
    </location>
</feature>
<feature type="site" description="Important for tRNA non-discrimination" evidence="1">
    <location>
        <position position="95"/>
    </location>
</feature>
<evidence type="ECO:0000255" key="1">
    <source>
        <dbReference type="HAMAP-Rule" id="MF_00044"/>
    </source>
</evidence>
<dbReference type="EC" id="6.1.1.23" evidence="1"/>
<dbReference type="EMBL" id="CP001110">
    <property type="protein sequence ID" value="ACF43857.1"/>
    <property type="molecule type" value="Genomic_DNA"/>
</dbReference>
<dbReference type="RefSeq" id="WP_012508344.1">
    <property type="nucleotide sequence ID" value="NC_011060.1"/>
</dbReference>
<dbReference type="SMR" id="B4SAH1"/>
<dbReference type="STRING" id="324925.Ppha_1620"/>
<dbReference type="KEGG" id="pph:Ppha_1620"/>
<dbReference type="eggNOG" id="COG0173">
    <property type="taxonomic scope" value="Bacteria"/>
</dbReference>
<dbReference type="HOGENOM" id="CLU_014330_3_2_10"/>
<dbReference type="OrthoDB" id="9802326at2"/>
<dbReference type="Proteomes" id="UP000002724">
    <property type="component" value="Chromosome"/>
</dbReference>
<dbReference type="GO" id="GO:0005737">
    <property type="term" value="C:cytoplasm"/>
    <property type="evidence" value="ECO:0007669"/>
    <property type="project" value="UniProtKB-SubCell"/>
</dbReference>
<dbReference type="GO" id="GO:0004815">
    <property type="term" value="F:aspartate-tRNA ligase activity"/>
    <property type="evidence" value="ECO:0007669"/>
    <property type="project" value="UniProtKB-UniRule"/>
</dbReference>
<dbReference type="GO" id="GO:0050560">
    <property type="term" value="F:aspartate-tRNA(Asn) ligase activity"/>
    <property type="evidence" value="ECO:0007669"/>
    <property type="project" value="UniProtKB-EC"/>
</dbReference>
<dbReference type="GO" id="GO:0005524">
    <property type="term" value="F:ATP binding"/>
    <property type="evidence" value="ECO:0007669"/>
    <property type="project" value="UniProtKB-UniRule"/>
</dbReference>
<dbReference type="GO" id="GO:0003676">
    <property type="term" value="F:nucleic acid binding"/>
    <property type="evidence" value="ECO:0007669"/>
    <property type="project" value="InterPro"/>
</dbReference>
<dbReference type="GO" id="GO:0006422">
    <property type="term" value="P:aspartyl-tRNA aminoacylation"/>
    <property type="evidence" value="ECO:0007669"/>
    <property type="project" value="UniProtKB-UniRule"/>
</dbReference>
<dbReference type="CDD" id="cd00777">
    <property type="entry name" value="AspRS_core"/>
    <property type="match status" value="1"/>
</dbReference>
<dbReference type="CDD" id="cd04317">
    <property type="entry name" value="EcAspRS_like_N"/>
    <property type="match status" value="1"/>
</dbReference>
<dbReference type="Gene3D" id="3.30.930.10">
    <property type="entry name" value="Bira Bifunctional Protein, Domain 2"/>
    <property type="match status" value="1"/>
</dbReference>
<dbReference type="Gene3D" id="3.30.1360.30">
    <property type="entry name" value="GAD-like domain"/>
    <property type="match status" value="1"/>
</dbReference>
<dbReference type="Gene3D" id="2.40.50.140">
    <property type="entry name" value="Nucleic acid-binding proteins"/>
    <property type="match status" value="1"/>
</dbReference>
<dbReference type="HAMAP" id="MF_00044">
    <property type="entry name" value="Asp_tRNA_synth_type1"/>
    <property type="match status" value="1"/>
</dbReference>
<dbReference type="InterPro" id="IPR004364">
    <property type="entry name" value="Aa-tRNA-synt_II"/>
</dbReference>
<dbReference type="InterPro" id="IPR006195">
    <property type="entry name" value="aa-tRNA-synth_II"/>
</dbReference>
<dbReference type="InterPro" id="IPR045864">
    <property type="entry name" value="aa-tRNA-synth_II/BPL/LPL"/>
</dbReference>
<dbReference type="InterPro" id="IPR004524">
    <property type="entry name" value="Asp-tRNA-ligase_1"/>
</dbReference>
<dbReference type="InterPro" id="IPR047089">
    <property type="entry name" value="Asp-tRNA-ligase_1_N"/>
</dbReference>
<dbReference type="InterPro" id="IPR002312">
    <property type="entry name" value="Asp/Asn-tRNA-synth_IIb"/>
</dbReference>
<dbReference type="InterPro" id="IPR047090">
    <property type="entry name" value="AspRS_core"/>
</dbReference>
<dbReference type="InterPro" id="IPR004115">
    <property type="entry name" value="GAD-like_sf"/>
</dbReference>
<dbReference type="InterPro" id="IPR029351">
    <property type="entry name" value="GAD_dom"/>
</dbReference>
<dbReference type="InterPro" id="IPR012340">
    <property type="entry name" value="NA-bd_OB-fold"/>
</dbReference>
<dbReference type="InterPro" id="IPR004365">
    <property type="entry name" value="NA-bd_OB_tRNA"/>
</dbReference>
<dbReference type="NCBIfam" id="TIGR00459">
    <property type="entry name" value="aspS_bact"/>
    <property type="match status" value="1"/>
</dbReference>
<dbReference type="NCBIfam" id="NF001750">
    <property type="entry name" value="PRK00476.1"/>
    <property type="match status" value="1"/>
</dbReference>
<dbReference type="PANTHER" id="PTHR22594:SF5">
    <property type="entry name" value="ASPARTATE--TRNA LIGASE, MITOCHONDRIAL"/>
    <property type="match status" value="1"/>
</dbReference>
<dbReference type="PANTHER" id="PTHR22594">
    <property type="entry name" value="ASPARTYL/LYSYL-TRNA SYNTHETASE"/>
    <property type="match status" value="1"/>
</dbReference>
<dbReference type="Pfam" id="PF02938">
    <property type="entry name" value="GAD"/>
    <property type="match status" value="1"/>
</dbReference>
<dbReference type="Pfam" id="PF00152">
    <property type="entry name" value="tRNA-synt_2"/>
    <property type="match status" value="1"/>
</dbReference>
<dbReference type="Pfam" id="PF01336">
    <property type="entry name" value="tRNA_anti-codon"/>
    <property type="match status" value="1"/>
</dbReference>
<dbReference type="PRINTS" id="PR01042">
    <property type="entry name" value="TRNASYNTHASP"/>
</dbReference>
<dbReference type="SUPFAM" id="SSF55681">
    <property type="entry name" value="Class II aaRS and biotin synthetases"/>
    <property type="match status" value="1"/>
</dbReference>
<dbReference type="SUPFAM" id="SSF55261">
    <property type="entry name" value="GAD domain-like"/>
    <property type="match status" value="1"/>
</dbReference>
<dbReference type="SUPFAM" id="SSF50249">
    <property type="entry name" value="Nucleic acid-binding proteins"/>
    <property type="match status" value="1"/>
</dbReference>
<dbReference type="PROSITE" id="PS50862">
    <property type="entry name" value="AA_TRNA_LIGASE_II"/>
    <property type="match status" value="1"/>
</dbReference>
<protein>
    <recommendedName>
        <fullName evidence="1">Aspartate--tRNA(Asp/Asn) ligase</fullName>
        <ecNumber evidence="1">6.1.1.23</ecNumber>
    </recommendedName>
    <alternativeName>
        <fullName evidence="1">Aspartyl-tRNA synthetase</fullName>
        <shortName evidence="1">AspRS</shortName>
    </alternativeName>
    <alternativeName>
        <fullName evidence="1">Non-discriminating aspartyl-tRNA synthetase</fullName>
        <shortName evidence="1">ND-AspRS</shortName>
    </alternativeName>
</protein>
<keyword id="KW-0030">Aminoacyl-tRNA synthetase</keyword>
<keyword id="KW-0067">ATP-binding</keyword>
<keyword id="KW-0963">Cytoplasm</keyword>
<keyword id="KW-0436">Ligase</keyword>
<keyword id="KW-0547">Nucleotide-binding</keyword>
<keyword id="KW-0648">Protein biosynthesis</keyword>
<keyword id="KW-1185">Reference proteome</keyword>
<comment type="function">
    <text evidence="1">Aspartyl-tRNA synthetase with relaxed tRNA specificity since it is able to aspartylate not only its cognate tRNA(Asp) but also tRNA(Asn). Reaction proceeds in two steps: L-aspartate is first activated by ATP to form Asp-AMP and then transferred to the acceptor end of tRNA(Asp/Asn).</text>
</comment>
<comment type="catalytic activity">
    <reaction evidence="1">
        <text>tRNA(Asx) + L-aspartate + ATP = L-aspartyl-tRNA(Asx) + AMP + diphosphate</text>
        <dbReference type="Rhea" id="RHEA:18349"/>
        <dbReference type="Rhea" id="RHEA-COMP:9710"/>
        <dbReference type="Rhea" id="RHEA-COMP:9711"/>
        <dbReference type="ChEBI" id="CHEBI:29991"/>
        <dbReference type="ChEBI" id="CHEBI:30616"/>
        <dbReference type="ChEBI" id="CHEBI:33019"/>
        <dbReference type="ChEBI" id="CHEBI:78442"/>
        <dbReference type="ChEBI" id="CHEBI:78516"/>
        <dbReference type="ChEBI" id="CHEBI:456215"/>
        <dbReference type="EC" id="6.1.1.23"/>
    </reaction>
</comment>
<comment type="subunit">
    <text evidence="1">Homodimer.</text>
</comment>
<comment type="subcellular location">
    <subcellularLocation>
        <location evidence="1">Cytoplasm</location>
    </subcellularLocation>
</comment>
<comment type="similarity">
    <text evidence="1">Belongs to the class-II aminoacyl-tRNA synthetase family. Type 1 subfamily.</text>
</comment>
<organism>
    <name type="scientific">Pelodictyon phaeoclathratiforme (strain DSM 5477 / BU-1)</name>
    <dbReference type="NCBI Taxonomy" id="324925"/>
    <lineage>
        <taxon>Bacteria</taxon>
        <taxon>Pseudomonadati</taxon>
        <taxon>Chlorobiota</taxon>
        <taxon>Chlorobiia</taxon>
        <taxon>Chlorobiales</taxon>
        <taxon>Chlorobiaceae</taxon>
        <taxon>Chlorobium/Pelodictyon group</taxon>
        <taxon>Pelodictyon</taxon>
    </lineage>
</organism>
<sequence length="601" mass="67983">MSKAAGSTQTLKNRFRSDYCGLLCPEREHGSVRLAGWVHRKRDHGGLIFIDLRDHTGISQLVIQPEQQELFAKAEQLHVESVICIEGVVVLRAPGAINSRLASGEIEVVVSQITVESNAHPLPFPVADEVVTSEELRLKYRFIDLRREKIHENIIFRSRLTAAIRRYLEEQDFIEIQTPILTSSSPEGARDFLVPSRLHPGKFYALPQAPQQFKQLLMVSGFPRYFQIAPCFRDEDARADRSPGEFYQLDMEMAFIEQNDLFTILEGMIEHLTRTMSHKRITQFPFPRISYKEVMNRFGTDKPDLRIPLEISDVTPLFVGSAFKVFANSTVEGSCVKALVVKGRGNESRLFYDKAEKRAKELGSGGLAYIQFREEGPKGPVVKFLSEADLATLKEHLGLETGDVVFFGAGKWESTCKIMGGMRTYFGDLFTLDKDELSFCWIVDFPMYEYNEEAKKIDFSHNPFSMPQGEMEALETMPPLDILAYQYDIVCNGIELSSGAIRNHKPEIMYKAFGIAGYSREEVDARFGHMIEAFKLGAPPHGGIAPGLDRLVMILCDEQNIREVIAFPMNQQAQDLMMGSPSEVTPVQLKELHLKVELPKK</sequence>
<accession>B4SAH1</accession>
<reference key="1">
    <citation type="submission" date="2008-06" db="EMBL/GenBank/DDBJ databases">
        <title>Complete sequence of Pelodictyon phaeoclathratiforme BU-1.</title>
        <authorList>
            <consortium name="US DOE Joint Genome Institute"/>
            <person name="Lucas S."/>
            <person name="Copeland A."/>
            <person name="Lapidus A."/>
            <person name="Glavina del Rio T."/>
            <person name="Dalin E."/>
            <person name="Tice H."/>
            <person name="Bruce D."/>
            <person name="Goodwin L."/>
            <person name="Pitluck S."/>
            <person name="Schmutz J."/>
            <person name="Larimer F."/>
            <person name="Land M."/>
            <person name="Hauser L."/>
            <person name="Kyrpides N."/>
            <person name="Mikhailova N."/>
            <person name="Liu Z."/>
            <person name="Li T."/>
            <person name="Zhao F."/>
            <person name="Overmann J."/>
            <person name="Bryant D.A."/>
            <person name="Richardson P."/>
        </authorList>
    </citation>
    <scope>NUCLEOTIDE SEQUENCE [LARGE SCALE GENOMIC DNA]</scope>
    <source>
        <strain>DSM 5477 / BU-1</strain>
    </source>
</reference>